<evidence type="ECO:0000255" key="1">
    <source>
        <dbReference type="HAMAP-Rule" id="MF_01454"/>
    </source>
</evidence>
<evidence type="ECO:0000255" key="2">
    <source>
        <dbReference type="PROSITE-ProRule" id="PRU01231"/>
    </source>
</evidence>
<reference key="1">
    <citation type="journal article" date="2011" name="MBio">
        <title>Novel metabolic attributes of the genus Cyanothece, comprising a group of unicellular nitrogen-fixing Cyanobacteria.</title>
        <authorList>
            <person name="Bandyopadhyay A."/>
            <person name="Elvitigala T."/>
            <person name="Welsh E."/>
            <person name="Stockel J."/>
            <person name="Liberton M."/>
            <person name="Min H."/>
            <person name="Sherman L.A."/>
            <person name="Pakrasi H.B."/>
        </authorList>
    </citation>
    <scope>NUCLEOTIDE SEQUENCE [LARGE SCALE GENOMIC DNA]</scope>
    <source>
        <strain>PCC 7424</strain>
    </source>
</reference>
<gene>
    <name evidence="1" type="primary">obg</name>
    <name type="ordered locus">PCC7424_5260</name>
</gene>
<dbReference type="EC" id="3.6.5.-" evidence="1"/>
<dbReference type="EMBL" id="CP001291">
    <property type="protein sequence ID" value="ACK73608.1"/>
    <property type="molecule type" value="Genomic_DNA"/>
</dbReference>
<dbReference type="RefSeq" id="WP_015957186.1">
    <property type="nucleotide sequence ID" value="NC_011729.1"/>
</dbReference>
<dbReference type="SMR" id="B7KIC1"/>
<dbReference type="STRING" id="65393.PCC7424_5260"/>
<dbReference type="KEGG" id="cyc:PCC7424_5260"/>
<dbReference type="eggNOG" id="COG0536">
    <property type="taxonomic scope" value="Bacteria"/>
</dbReference>
<dbReference type="HOGENOM" id="CLU_011747_2_0_3"/>
<dbReference type="OrthoDB" id="9807318at2"/>
<dbReference type="Proteomes" id="UP000002384">
    <property type="component" value="Chromosome"/>
</dbReference>
<dbReference type="GO" id="GO:0005737">
    <property type="term" value="C:cytoplasm"/>
    <property type="evidence" value="ECO:0007669"/>
    <property type="project" value="UniProtKB-SubCell"/>
</dbReference>
<dbReference type="GO" id="GO:0005525">
    <property type="term" value="F:GTP binding"/>
    <property type="evidence" value="ECO:0007669"/>
    <property type="project" value="UniProtKB-UniRule"/>
</dbReference>
<dbReference type="GO" id="GO:0003924">
    <property type="term" value="F:GTPase activity"/>
    <property type="evidence" value="ECO:0007669"/>
    <property type="project" value="UniProtKB-UniRule"/>
</dbReference>
<dbReference type="GO" id="GO:0000287">
    <property type="term" value="F:magnesium ion binding"/>
    <property type="evidence" value="ECO:0007669"/>
    <property type="project" value="InterPro"/>
</dbReference>
<dbReference type="GO" id="GO:0042254">
    <property type="term" value="P:ribosome biogenesis"/>
    <property type="evidence" value="ECO:0007669"/>
    <property type="project" value="UniProtKB-UniRule"/>
</dbReference>
<dbReference type="CDD" id="cd01898">
    <property type="entry name" value="Obg"/>
    <property type="match status" value="1"/>
</dbReference>
<dbReference type="FunFam" id="2.70.210.12:FF:000001">
    <property type="entry name" value="GTPase Obg"/>
    <property type="match status" value="1"/>
</dbReference>
<dbReference type="Gene3D" id="2.70.210.12">
    <property type="entry name" value="GTP1/OBG domain"/>
    <property type="match status" value="1"/>
</dbReference>
<dbReference type="Gene3D" id="3.40.50.300">
    <property type="entry name" value="P-loop containing nucleotide triphosphate hydrolases"/>
    <property type="match status" value="1"/>
</dbReference>
<dbReference type="HAMAP" id="MF_01454">
    <property type="entry name" value="GTPase_Obg"/>
    <property type="match status" value="1"/>
</dbReference>
<dbReference type="InterPro" id="IPR031167">
    <property type="entry name" value="G_OBG"/>
</dbReference>
<dbReference type="InterPro" id="IPR006073">
    <property type="entry name" value="GTP-bd"/>
</dbReference>
<dbReference type="InterPro" id="IPR014100">
    <property type="entry name" value="GTP-bd_Obg/CgtA"/>
</dbReference>
<dbReference type="InterPro" id="IPR006074">
    <property type="entry name" value="GTP1-OBG_CS"/>
</dbReference>
<dbReference type="InterPro" id="IPR006169">
    <property type="entry name" value="GTP1_OBG_dom"/>
</dbReference>
<dbReference type="InterPro" id="IPR036726">
    <property type="entry name" value="GTP1_OBG_dom_sf"/>
</dbReference>
<dbReference type="InterPro" id="IPR045086">
    <property type="entry name" value="OBG_GTPase"/>
</dbReference>
<dbReference type="InterPro" id="IPR027417">
    <property type="entry name" value="P-loop_NTPase"/>
</dbReference>
<dbReference type="NCBIfam" id="TIGR02729">
    <property type="entry name" value="Obg_CgtA"/>
    <property type="match status" value="1"/>
</dbReference>
<dbReference type="NCBIfam" id="NF008955">
    <property type="entry name" value="PRK12297.1"/>
    <property type="match status" value="1"/>
</dbReference>
<dbReference type="NCBIfam" id="NF008956">
    <property type="entry name" value="PRK12299.1"/>
    <property type="match status" value="1"/>
</dbReference>
<dbReference type="PANTHER" id="PTHR11702">
    <property type="entry name" value="DEVELOPMENTALLY REGULATED GTP-BINDING PROTEIN-RELATED"/>
    <property type="match status" value="1"/>
</dbReference>
<dbReference type="PANTHER" id="PTHR11702:SF31">
    <property type="entry name" value="MITOCHONDRIAL RIBOSOME-ASSOCIATED GTPASE 2"/>
    <property type="match status" value="1"/>
</dbReference>
<dbReference type="Pfam" id="PF01018">
    <property type="entry name" value="GTP1_OBG"/>
    <property type="match status" value="1"/>
</dbReference>
<dbReference type="Pfam" id="PF01926">
    <property type="entry name" value="MMR_HSR1"/>
    <property type="match status" value="1"/>
</dbReference>
<dbReference type="PIRSF" id="PIRSF002401">
    <property type="entry name" value="GTP_bd_Obg/CgtA"/>
    <property type="match status" value="1"/>
</dbReference>
<dbReference type="PRINTS" id="PR00326">
    <property type="entry name" value="GTP1OBG"/>
</dbReference>
<dbReference type="SUPFAM" id="SSF82051">
    <property type="entry name" value="Obg GTP-binding protein N-terminal domain"/>
    <property type="match status" value="1"/>
</dbReference>
<dbReference type="SUPFAM" id="SSF52540">
    <property type="entry name" value="P-loop containing nucleoside triphosphate hydrolases"/>
    <property type="match status" value="1"/>
</dbReference>
<dbReference type="PROSITE" id="PS51710">
    <property type="entry name" value="G_OBG"/>
    <property type="match status" value="1"/>
</dbReference>
<dbReference type="PROSITE" id="PS00905">
    <property type="entry name" value="GTP1_OBG"/>
    <property type="match status" value="1"/>
</dbReference>
<dbReference type="PROSITE" id="PS51883">
    <property type="entry name" value="OBG"/>
    <property type="match status" value="1"/>
</dbReference>
<name>OBG_GLOC7</name>
<sequence>MQFIDQAEIEVQAGKGGDGIVAFRREKYVPAGGPSGGNGGRGGSVILVAVEHLQTLLDFRYSRHFKAEDGKRGGPNNCTGANGSDRIIEVPRGTMIYDADTEEIIGDLVDNEQRLCIAQGGKGGLGNQHFLSNKNRAPEYALPGLEGEHRRIRLELKLLAEVGIIGLPNAGKSTLISALSSARPKIADYPFTTLIPNLGVVRKPTGDGTVFADIPGLIEGAHEGVGLGYDFLRHIERTRLLLHLVDLTAEDPIKDYQIIQQELEAYGRGLIDRPQIIGLNKLDAVDETVVTQIENDLSQITSDPIFKISAVARIGLDQMLQATWEQLDSNPSEVNISH</sequence>
<feature type="chain" id="PRO_0000385870" description="GTPase Obg">
    <location>
        <begin position="1"/>
        <end position="338"/>
    </location>
</feature>
<feature type="domain" description="Obg" evidence="2">
    <location>
        <begin position="1"/>
        <end position="159"/>
    </location>
</feature>
<feature type="domain" description="OBG-type G" evidence="1">
    <location>
        <begin position="160"/>
        <end position="328"/>
    </location>
</feature>
<feature type="binding site" evidence="1">
    <location>
        <begin position="166"/>
        <end position="173"/>
    </location>
    <ligand>
        <name>GTP</name>
        <dbReference type="ChEBI" id="CHEBI:37565"/>
    </ligand>
</feature>
<feature type="binding site" evidence="1">
    <location>
        <position position="173"/>
    </location>
    <ligand>
        <name>Mg(2+)</name>
        <dbReference type="ChEBI" id="CHEBI:18420"/>
    </ligand>
</feature>
<feature type="binding site" evidence="1">
    <location>
        <begin position="191"/>
        <end position="195"/>
    </location>
    <ligand>
        <name>GTP</name>
        <dbReference type="ChEBI" id="CHEBI:37565"/>
    </ligand>
</feature>
<feature type="binding site" evidence="1">
    <location>
        <position position="193"/>
    </location>
    <ligand>
        <name>Mg(2+)</name>
        <dbReference type="ChEBI" id="CHEBI:18420"/>
    </ligand>
</feature>
<feature type="binding site" evidence="1">
    <location>
        <begin position="213"/>
        <end position="216"/>
    </location>
    <ligand>
        <name>GTP</name>
        <dbReference type="ChEBI" id="CHEBI:37565"/>
    </ligand>
</feature>
<feature type="binding site" evidence="1">
    <location>
        <begin position="280"/>
        <end position="283"/>
    </location>
    <ligand>
        <name>GTP</name>
        <dbReference type="ChEBI" id="CHEBI:37565"/>
    </ligand>
</feature>
<feature type="binding site" evidence="1">
    <location>
        <begin position="309"/>
        <end position="311"/>
    </location>
    <ligand>
        <name>GTP</name>
        <dbReference type="ChEBI" id="CHEBI:37565"/>
    </ligand>
</feature>
<comment type="function">
    <text evidence="1">An essential GTPase which binds GTP, GDP and possibly (p)ppGpp with moderate affinity, with high nucleotide exchange rates and a fairly low GTP hydrolysis rate. Plays a role in control of the cell cycle, stress response, ribosome biogenesis and in those bacteria that undergo differentiation, in morphogenesis control.</text>
</comment>
<comment type="cofactor">
    <cofactor evidence="1">
        <name>Mg(2+)</name>
        <dbReference type="ChEBI" id="CHEBI:18420"/>
    </cofactor>
</comment>
<comment type="subunit">
    <text evidence="1">Monomer.</text>
</comment>
<comment type="subcellular location">
    <subcellularLocation>
        <location evidence="1">Cytoplasm</location>
    </subcellularLocation>
</comment>
<comment type="similarity">
    <text evidence="1">Belongs to the TRAFAC class OBG-HflX-like GTPase superfamily. OBG GTPase family.</text>
</comment>
<organism>
    <name type="scientific">Gloeothece citriformis (strain PCC 7424)</name>
    <name type="common">Cyanothece sp. (strain PCC 7424)</name>
    <dbReference type="NCBI Taxonomy" id="65393"/>
    <lineage>
        <taxon>Bacteria</taxon>
        <taxon>Bacillati</taxon>
        <taxon>Cyanobacteriota</taxon>
        <taxon>Cyanophyceae</taxon>
        <taxon>Oscillatoriophycideae</taxon>
        <taxon>Chroococcales</taxon>
        <taxon>Aphanothecaceae</taxon>
        <taxon>Gloeothece</taxon>
        <taxon>Gloeothece citriformis</taxon>
    </lineage>
</organism>
<keyword id="KW-0963">Cytoplasm</keyword>
<keyword id="KW-0342">GTP-binding</keyword>
<keyword id="KW-0378">Hydrolase</keyword>
<keyword id="KW-0460">Magnesium</keyword>
<keyword id="KW-0479">Metal-binding</keyword>
<keyword id="KW-0547">Nucleotide-binding</keyword>
<keyword id="KW-1185">Reference proteome</keyword>
<proteinExistence type="inferred from homology"/>
<accession>B7KIC1</accession>
<protein>
    <recommendedName>
        <fullName evidence="1">GTPase Obg</fullName>
        <ecNumber evidence="1">3.6.5.-</ecNumber>
    </recommendedName>
    <alternativeName>
        <fullName evidence="1">GTP-binding protein Obg</fullName>
    </alternativeName>
</protein>